<feature type="chain" id="PRO_0000365928" description="ATP synthase subunit c">
    <location>
        <begin position="1"/>
        <end position="81"/>
    </location>
</feature>
<feature type="transmembrane region" description="Helical" evidence="1">
    <location>
        <begin position="7"/>
        <end position="27"/>
    </location>
</feature>
<feature type="transmembrane region" description="Helical" evidence="1">
    <location>
        <begin position="57"/>
        <end position="77"/>
    </location>
</feature>
<feature type="site" description="Reversibly protonated during proton transport" evidence="1">
    <location>
        <position position="61"/>
    </location>
</feature>
<reference key="1">
    <citation type="journal article" date="2006" name="Proc. Natl. Acad. Sci. U.S.A.">
        <title>Genome sequence of Synechococcus CC9311: insights into adaptation to a coastal environment.</title>
        <authorList>
            <person name="Palenik B."/>
            <person name="Ren Q."/>
            <person name="Dupont C.L."/>
            <person name="Myers G.S."/>
            <person name="Heidelberg J.F."/>
            <person name="Badger J.H."/>
            <person name="Madupu R."/>
            <person name="Nelson W.C."/>
            <person name="Brinkac L.M."/>
            <person name="Dodson R.J."/>
            <person name="Durkin A.S."/>
            <person name="Daugherty S.C."/>
            <person name="Sullivan S.A."/>
            <person name="Khouri H."/>
            <person name="Mohamoud Y."/>
            <person name="Halpin R."/>
            <person name="Paulsen I.T."/>
        </authorList>
    </citation>
    <scope>NUCLEOTIDE SEQUENCE [LARGE SCALE GENOMIC DNA]</scope>
    <source>
        <strain>CC9311</strain>
    </source>
</reference>
<dbReference type="EMBL" id="CP000435">
    <property type="protein sequence ID" value="ABI47459.1"/>
    <property type="molecule type" value="Genomic_DNA"/>
</dbReference>
<dbReference type="RefSeq" id="WP_006854325.1">
    <property type="nucleotide sequence ID" value="NC_008319.1"/>
</dbReference>
<dbReference type="SMR" id="Q0I7Q8"/>
<dbReference type="STRING" id="64471.sync_2317"/>
<dbReference type="KEGG" id="syg:sync_2317"/>
<dbReference type="eggNOG" id="COG0636">
    <property type="taxonomic scope" value="Bacteria"/>
</dbReference>
<dbReference type="HOGENOM" id="CLU_148047_2_0_3"/>
<dbReference type="OrthoDB" id="9810379at2"/>
<dbReference type="Proteomes" id="UP000001961">
    <property type="component" value="Chromosome"/>
</dbReference>
<dbReference type="GO" id="GO:0031676">
    <property type="term" value="C:plasma membrane-derived thylakoid membrane"/>
    <property type="evidence" value="ECO:0007669"/>
    <property type="project" value="UniProtKB-SubCell"/>
</dbReference>
<dbReference type="GO" id="GO:0045259">
    <property type="term" value="C:proton-transporting ATP synthase complex"/>
    <property type="evidence" value="ECO:0007669"/>
    <property type="project" value="UniProtKB-KW"/>
</dbReference>
<dbReference type="GO" id="GO:0033177">
    <property type="term" value="C:proton-transporting two-sector ATPase complex, proton-transporting domain"/>
    <property type="evidence" value="ECO:0007669"/>
    <property type="project" value="InterPro"/>
</dbReference>
<dbReference type="GO" id="GO:0008289">
    <property type="term" value="F:lipid binding"/>
    <property type="evidence" value="ECO:0007669"/>
    <property type="project" value="UniProtKB-KW"/>
</dbReference>
<dbReference type="GO" id="GO:0046933">
    <property type="term" value="F:proton-transporting ATP synthase activity, rotational mechanism"/>
    <property type="evidence" value="ECO:0007669"/>
    <property type="project" value="UniProtKB-UniRule"/>
</dbReference>
<dbReference type="CDD" id="cd18183">
    <property type="entry name" value="ATP-synt_Fo_c_ATPH"/>
    <property type="match status" value="1"/>
</dbReference>
<dbReference type="FunFam" id="1.20.20.10:FF:000001">
    <property type="entry name" value="ATP synthase subunit c, chloroplastic"/>
    <property type="match status" value="1"/>
</dbReference>
<dbReference type="Gene3D" id="1.20.20.10">
    <property type="entry name" value="F1F0 ATP synthase subunit C"/>
    <property type="match status" value="1"/>
</dbReference>
<dbReference type="HAMAP" id="MF_01396">
    <property type="entry name" value="ATP_synth_c_bact"/>
    <property type="match status" value="1"/>
</dbReference>
<dbReference type="InterPro" id="IPR005953">
    <property type="entry name" value="ATP_synth_csu_bac/chlpt"/>
</dbReference>
<dbReference type="InterPro" id="IPR000454">
    <property type="entry name" value="ATP_synth_F0_csu"/>
</dbReference>
<dbReference type="InterPro" id="IPR020537">
    <property type="entry name" value="ATP_synth_F0_csu_DDCD_BS"/>
</dbReference>
<dbReference type="InterPro" id="IPR038662">
    <property type="entry name" value="ATP_synth_F0_csu_sf"/>
</dbReference>
<dbReference type="InterPro" id="IPR002379">
    <property type="entry name" value="ATPase_proteolipid_c-like_dom"/>
</dbReference>
<dbReference type="InterPro" id="IPR035921">
    <property type="entry name" value="F/V-ATP_Csub_sf"/>
</dbReference>
<dbReference type="NCBIfam" id="TIGR01260">
    <property type="entry name" value="ATP_synt_c"/>
    <property type="match status" value="1"/>
</dbReference>
<dbReference type="NCBIfam" id="NF005608">
    <property type="entry name" value="PRK07354.1"/>
    <property type="match status" value="1"/>
</dbReference>
<dbReference type="PANTHER" id="PTHR10031">
    <property type="entry name" value="ATP SYNTHASE LIPID-BINDING PROTEIN, MITOCHONDRIAL"/>
    <property type="match status" value="1"/>
</dbReference>
<dbReference type="PANTHER" id="PTHR10031:SF0">
    <property type="entry name" value="ATPASE PROTEIN 9"/>
    <property type="match status" value="1"/>
</dbReference>
<dbReference type="Pfam" id="PF00137">
    <property type="entry name" value="ATP-synt_C"/>
    <property type="match status" value="1"/>
</dbReference>
<dbReference type="PRINTS" id="PR00124">
    <property type="entry name" value="ATPASEC"/>
</dbReference>
<dbReference type="SUPFAM" id="SSF81333">
    <property type="entry name" value="F1F0 ATP synthase subunit C"/>
    <property type="match status" value="1"/>
</dbReference>
<dbReference type="PROSITE" id="PS00605">
    <property type="entry name" value="ATPASE_C"/>
    <property type="match status" value="1"/>
</dbReference>
<comment type="function">
    <text evidence="1">F(1)F(0) ATP synthase produces ATP from ADP in the presence of a proton or sodium gradient. F-type ATPases consist of two structural domains, F(1) containing the extramembraneous catalytic core and F(0) containing the membrane proton channel, linked together by a central stalk and a peripheral stalk. During catalysis, ATP synthesis in the catalytic domain of F(1) is coupled via a rotary mechanism of the central stalk subunits to proton translocation.</text>
</comment>
<comment type="function">
    <text evidence="1">Key component of the F(0) channel; it plays a direct role in translocation across the membrane. A homomeric c-ring of between 10-14 subunits forms the central stalk rotor element with the F(1) delta and epsilon subunits.</text>
</comment>
<comment type="subunit">
    <text evidence="1">F-type ATPases have 2 components, F(1) - the catalytic core - and F(0) - the membrane proton channel. F(1) has five subunits: alpha(3), beta(3), gamma(1), delta(1), epsilon(1). F(0) has four main subunits: a(1), b(1), b'(1) and c(10-14). The alpha and beta chains form an alternating ring which encloses part of the gamma chain. F(1) is attached to F(0) by a central stalk formed by the gamma and epsilon chains, while a peripheral stalk is formed by the delta, b and b' chains.</text>
</comment>
<comment type="subcellular location">
    <subcellularLocation>
        <location evidence="1">Cellular thylakoid membrane</location>
        <topology evidence="1">Multi-pass membrane protein</topology>
    </subcellularLocation>
</comment>
<comment type="similarity">
    <text evidence="1">Belongs to the ATPase C chain family.</text>
</comment>
<proteinExistence type="inferred from homology"/>
<sequence length="81" mass="7971">MDSITSAASVVAAGLAVGLAAIGPGIGQGSASQGAVEGIARQPEAEGKIRGTLLLSLAFMESLTIYGLVVALVLLFANPFA</sequence>
<protein>
    <recommendedName>
        <fullName evidence="1">ATP synthase subunit c</fullName>
    </recommendedName>
    <alternativeName>
        <fullName evidence="1">ATP synthase F(0) sector subunit c</fullName>
    </alternativeName>
    <alternativeName>
        <fullName evidence="1">F-type ATPase subunit c</fullName>
        <shortName evidence="1">F-ATPase subunit c</shortName>
    </alternativeName>
    <alternativeName>
        <fullName evidence="1">Lipid-binding protein</fullName>
    </alternativeName>
</protein>
<accession>Q0I7Q8</accession>
<evidence type="ECO:0000255" key="1">
    <source>
        <dbReference type="HAMAP-Rule" id="MF_01396"/>
    </source>
</evidence>
<gene>
    <name evidence="1" type="primary">atpE</name>
    <name evidence="1" type="synonym">atpH</name>
    <name type="ordered locus">sync_2317</name>
</gene>
<name>ATPL_SYNS3</name>
<keyword id="KW-0066">ATP synthesis</keyword>
<keyword id="KW-0138">CF(0)</keyword>
<keyword id="KW-0375">Hydrogen ion transport</keyword>
<keyword id="KW-0406">Ion transport</keyword>
<keyword id="KW-0446">Lipid-binding</keyword>
<keyword id="KW-0472">Membrane</keyword>
<keyword id="KW-1185">Reference proteome</keyword>
<keyword id="KW-0793">Thylakoid</keyword>
<keyword id="KW-0812">Transmembrane</keyword>
<keyword id="KW-1133">Transmembrane helix</keyword>
<keyword id="KW-0813">Transport</keyword>
<organism>
    <name type="scientific">Synechococcus sp. (strain CC9311)</name>
    <dbReference type="NCBI Taxonomy" id="64471"/>
    <lineage>
        <taxon>Bacteria</taxon>
        <taxon>Bacillati</taxon>
        <taxon>Cyanobacteriota</taxon>
        <taxon>Cyanophyceae</taxon>
        <taxon>Synechococcales</taxon>
        <taxon>Synechococcaceae</taxon>
        <taxon>Synechococcus</taxon>
    </lineage>
</organism>